<keyword id="KW-0028">Amino-acid biosynthesis</keyword>
<keyword id="KW-0963">Cytoplasm</keyword>
<keyword id="KW-0368">Histidine biosynthesis</keyword>
<keyword id="KW-1185">Reference proteome</keyword>
<accession>B1XPZ9</accession>
<proteinExistence type="inferred from homology"/>
<organism>
    <name type="scientific">Picosynechococcus sp. (strain ATCC 27264 / PCC 7002 / PR-6)</name>
    <name type="common">Agmenellum quadruplicatum</name>
    <dbReference type="NCBI Taxonomy" id="32049"/>
    <lineage>
        <taxon>Bacteria</taxon>
        <taxon>Bacillati</taxon>
        <taxon>Cyanobacteriota</taxon>
        <taxon>Cyanophyceae</taxon>
        <taxon>Oscillatoriophycideae</taxon>
        <taxon>Chroococcales</taxon>
        <taxon>Geminocystaceae</taxon>
        <taxon>Picosynechococcus</taxon>
    </lineage>
</organism>
<protein>
    <recommendedName>
        <fullName evidence="1">ATP phosphoribosyltransferase regulatory subunit</fullName>
    </recommendedName>
</protein>
<comment type="function">
    <text evidence="1">Required for the first step of histidine biosynthesis. May allow the feedback regulation of ATP phosphoribosyltransferase activity by histidine.</text>
</comment>
<comment type="pathway">
    <text evidence="1">Amino-acid biosynthesis; L-histidine biosynthesis; L-histidine from 5-phospho-alpha-D-ribose 1-diphosphate: step 1/9.</text>
</comment>
<comment type="subunit">
    <text evidence="1">Heteromultimer composed of HisG and HisZ subunits.</text>
</comment>
<comment type="subcellular location">
    <subcellularLocation>
        <location evidence="1">Cytoplasm</location>
    </subcellularLocation>
</comment>
<comment type="miscellaneous">
    <text>This function is generally fulfilled by the C-terminal part of HisG, which is missing in some bacteria such as this one.</text>
</comment>
<comment type="similarity">
    <text evidence="1">Belongs to the class-II aminoacyl-tRNA synthetase family. HisZ subfamily.</text>
</comment>
<feature type="chain" id="PRO_1000095472" description="ATP phosphoribosyltransferase regulatory subunit">
    <location>
        <begin position="1"/>
        <end position="404"/>
    </location>
</feature>
<evidence type="ECO:0000255" key="1">
    <source>
        <dbReference type="HAMAP-Rule" id="MF_00125"/>
    </source>
</evidence>
<reference key="1">
    <citation type="submission" date="2008-02" db="EMBL/GenBank/DDBJ databases">
        <title>Complete sequence of Synechococcus sp. PCC 7002.</title>
        <authorList>
            <person name="Li T."/>
            <person name="Zhao J."/>
            <person name="Zhao C."/>
            <person name="Liu Z."/>
            <person name="Zhao F."/>
            <person name="Marquardt J."/>
            <person name="Nomura C.T."/>
            <person name="Persson S."/>
            <person name="Detter J.C."/>
            <person name="Richardson P.M."/>
            <person name="Lanz C."/>
            <person name="Schuster S.C."/>
            <person name="Wang J."/>
            <person name="Li S."/>
            <person name="Huang X."/>
            <person name="Cai T."/>
            <person name="Yu Z."/>
            <person name="Luo J."/>
            <person name="Zhao J."/>
            <person name="Bryant D.A."/>
        </authorList>
    </citation>
    <scope>NUCLEOTIDE SEQUENCE [LARGE SCALE GENOMIC DNA]</scope>
    <source>
        <strain>ATCC 27264 / PCC 7002 / PR-6</strain>
    </source>
</reference>
<gene>
    <name evidence="1" type="primary">hisZ</name>
    <name type="ordered locus">SYNPCC7002_A0621</name>
</gene>
<name>HISZ_PICP2</name>
<sequence length="404" mass="44971">MIHQPPAGARDLLPLEVAQKAWINDNLQRVFQQWGYQRIVTSTLEWLETLTAGGAVDRTKVIQLQTAESQALGLRPELTASIARAAVTRMAENTFPQRLCYRANVFRHPPRGSHGKQMEFYQAGVELLFAAGIVADAEILLLLADSLDALGLEDWQLILGEAALGRSLLDPFPEPVRETVRHCVANLDRVGLQELPLDEDLKAYALDIFDLRGEPETILARVSQFDLGPEAQEIVANLKALFALLAGSTQKQLPIILDLTLIQTFDYYTGIVFEVVNFANHQSYILGQGGRYDQLLGLYHPQRENHPGIGFCLNIEELHTCLLTSPQLPKQLAGSAWLVIATEPNAQQQVFHYAQTLRQGDEMVRVEVELGGRSPAEIYAYARSSHITHLAWIDPSGEPKLETL</sequence>
<dbReference type="EMBL" id="CP000951">
    <property type="protein sequence ID" value="ACA98627.1"/>
    <property type="molecule type" value="Genomic_DNA"/>
</dbReference>
<dbReference type="RefSeq" id="WP_012306251.1">
    <property type="nucleotide sequence ID" value="NZ_JAHHPU010000001.1"/>
</dbReference>
<dbReference type="SMR" id="B1XPZ9"/>
<dbReference type="STRING" id="32049.SYNPCC7002_A0621"/>
<dbReference type="KEGG" id="syp:SYNPCC7002_A0621"/>
<dbReference type="eggNOG" id="COG3705">
    <property type="taxonomic scope" value="Bacteria"/>
</dbReference>
<dbReference type="HOGENOM" id="CLU_025113_0_2_3"/>
<dbReference type="UniPathway" id="UPA00031">
    <property type="reaction ID" value="UER00006"/>
</dbReference>
<dbReference type="Proteomes" id="UP000001688">
    <property type="component" value="Chromosome"/>
</dbReference>
<dbReference type="GO" id="GO:0005737">
    <property type="term" value="C:cytoplasm"/>
    <property type="evidence" value="ECO:0007669"/>
    <property type="project" value="UniProtKB-SubCell"/>
</dbReference>
<dbReference type="GO" id="GO:0004821">
    <property type="term" value="F:histidine-tRNA ligase activity"/>
    <property type="evidence" value="ECO:0007669"/>
    <property type="project" value="TreeGrafter"/>
</dbReference>
<dbReference type="GO" id="GO:0006427">
    <property type="term" value="P:histidyl-tRNA aminoacylation"/>
    <property type="evidence" value="ECO:0007669"/>
    <property type="project" value="TreeGrafter"/>
</dbReference>
<dbReference type="GO" id="GO:0000105">
    <property type="term" value="P:L-histidine biosynthetic process"/>
    <property type="evidence" value="ECO:0007669"/>
    <property type="project" value="UniProtKB-UniRule"/>
</dbReference>
<dbReference type="CDD" id="cd00773">
    <property type="entry name" value="HisRS-like_core"/>
    <property type="match status" value="1"/>
</dbReference>
<dbReference type="Gene3D" id="3.30.930.10">
    <property type="entry name" value="Bira Bifunctional Protein, Domain 2"/>
    <property type="match status" value="1"/>
</dbReference>
<dbReference type="HAMAP" id="MF_00125">
    <property type="entry name" value="HisZ"/>
    <property type="match status" value="1"/>
</dbReference>
<dbReference type="InterPro" id="IPR045864">
    <property type="entry name" value="aa-tRNA-synth_II/BPL/LPL"/>
</dbReference>
<dbReference type="InterPro" id="IPR041715">
    <property type="entry name" value="HisRS-like_core"/>
</dbReference>
<dbReference type="InterPro" id="IPR004516">
    <property type="entry name" value="HisRS/HisZ"/>
</dbReference>
<dbReference type="InterPro" id="IPR004517">
    <property type="entry name" value="HisZ"/>
</dbReference>
<dbReference type="NCBIfam" id="TIGR00443">
    <property type="entry name" value="hisZ_biosyn_reg"/>
    <property type="match status" value="1"/>
</dbReference>
<dbReference type="NCBIfam" id="NF008940">
    <property type="entry name" value="PRK12292.2-3"/>
    <property type="match status" value="1"/>
</dbReference>
<dbReference type="PANTHER" id="PTHR43707:SF1">
    <property type="entry name" value="HISTIDINE--TRNA LIGASE, MITOCHONDRIAL-RELATED"/>
    <property type="match status" value="1"/>
</dbReference>
<dbReference type="PANTHER" id="PTHR43707">
    <property type="entry name" value="HISTIDYL-TRNA SYNTHETASE"/>
    <property type="match status" value="1"/>
</dbReference>
<dbReference type="Pfam" id="PF13393">
    <property type="entry name" value="tRNA-synt_His"/>
    <property type="match status" value="1"/>
</dbReference>
<dbReference type="PIRSF" id="PIRSF001549">
    <property type="entry name" value="His-tRNA_synth"/>
    <property type="match status" value="1"/>
</dbReference>
<dbReference type="SUPFAM" id="SSF55681">
    <property type="entry name" value="Class II aaRS and biotin synthetases"/>
    <property type="match status" value="1"/>
</dbReference>